<keyword id="KW-0472">Membrane</keyword>
<keyword id="KW-1185">Reference proteome</keyword>
<keyword id="KW-0735">Signal-anchor</keyword>
<keyword id="KW-0812">Transmembrane</keyword>
<keyword id="KW-1133">Transmembrane helix</keyword>
<protein>
    <recommendedName>
        <fullName>Protein trichome birefringence-like 45</fullName>
    </recommendedName>
</protein>
<organism>
    <name type="scientific">Arabidopsis thaliana</name>
    <name type="common">Mouse-ear cress</name>
    <dbReference type="NCBI Taxonomy" id="3702"/>
    <lineage>
        <taxon>Eukaryota</taxon>
        <taxon>Viridiplantae</taxon>
        <taxon>Streptophyta</taxon>
        <taxon>Embryophyta</taxon>
        <taxon>Tracheophyta</taxon>
        <taxon>Spermatophyta</taxon>
        <taxon>Magnoliopsida</taxon>
        <taxon>eudicotyledons</taxon>
        <taxon>Gunneridae</taxon>
        <taxon>Pentapetalae</taxon>
        <taxon>rosids</taxon>
        <taxon>malvids</taxon>
        <taxon>Brassicales</taxon>
        <taxon>Brassicaceae</taxon>
        <taxon>Camelineae</taxon>
        <taxon>Arabidopsis</taxon>
    </lineage>
</organism>
<gene>
    <name type="primary">TBL45</name>
    <name type="ordered locus">At2g30010</name>
    <name type="ORF">F23F1.7</name>
</gene>
<comment type="function">
    <text evidence="1 2">May act as a bridging protein that binds pectin and other cell wall polysaccharides. Probably involved in maintaining esterification of pectins (By similarity). May be involved in the specific O-acetylation of cell wall polymers (By similarity).</text>
</comment>
<comment type="subcellular location">
    <subcellularLocation>
        <location evidence="4">Membrane</location>
        <topology evidence="4">Single-pass type II membrane protein</topology>
    </subcellularLocation>
</comment>
<comment type="miscellaneous">
    <text evidence="5">Contains 2 motifs that are conserved in esterases, but it is unlikely that this protein belongs to the catalytically active pectin esterases.</text>
</comment>
<comment type="similarity">
    <text evidence="4">Belongs to the PC-esterase family. TBL subfamily.</text>
</comment>
<reference key="1">
    <citation type="journal article" date="1999" name="Nature">
        <title>Sequence and analysis of chromosome 2 of the plant Arabidopsis thaliana.</title>
        <authorList>
            <person name="Lin X."/>
            <person name="Kaul S."/>
            <person name="Rounsley S.D."/>
            <person name="Shea T.P."/>
            <person name="Benito M.-I."/>
            <person name="Town C.D."/>
            <person name="Fujii C.Y."/>
            <person name="Mason T.M."/>
            <person name="Bowman C.L."/>
            <person name="Barnstead M.E."/>
            <person name="Feldblyum T.V."/>
            <person name="Buell C.R."/>
            <person name="Ketchum K.A."/>
            <person name="Lee J.J."/>
            <person name="Ronning C.M."/>
            <person name="Koo H.L."/>
            <person name="Moffat K.S."/>
            <person name="Cronin L.A."/>
            <person name="Shen M."/>
            <person name="Pai G."/>
            <person name="Van Aken S."/>
            <person name="Umayam L."/>
            <person name="Tallon L.J."/>
            <person name="Gill J.E."/>
            <person name="Adams M.D."/>
            <person name="Carrera A.J."/>
            <person name="Creasy T.H."/>
            <person name="Goodman H.M."/>
            <person name="Somerville C.R."/>
            <person name="Copenhaver G.P."/>
            <person name="Preuss D."/>
            <person name="Nierman W.C."/>
            <person name="White O."/>
            <person name="Eisen J.A."/>
            <person name="Salzberg S.L."/>
            <person name="Fraser C.M."/>
            <person name="Venter J.C."/>
        </authorList>
    </citation>
    <scope>NUCLEOTIDE SEQUENCE [LARGE SCALE GENOMIC DNA]</scope>
    <source>
        <strain>cv. Columbia</strain>
    </source>
</reference>
<reference key="2">
    <citation type="journal article" date="2017" name="Plant J.">
        <title>Araport11: a complete reannotation of the Arabidopsis thaliana reference genome.</title>
        <authorList>
            <person name="Cheng C.Y."/>
            <person name="Krishnakumar V."/>
            <person name="Chan A.P."/>
            <person name="Thibaud-Nissen F."/>
            <person name="Schobel S."/>
            <person name="Town C.D."/>
        </authorList>
    </citation>
    <scope>GENOME REANNOTATION</scope>
    <source>
        <strain>cv. Columbia</strain>
    </source>
</reference>
<reference key="3">
    <citation type="journal article" date="2003" name="Science">
        <title>Empirical analysis of transcriptional activity in the Arabidopsis genome.</title>
        <authorList>
            <person name="Yamada K."/>
            <person name="Lim J."/>
            <person name="Dale J.M."/>
            <person name="Chen H."/>
            <person name="Shinn P."/>
            <person name="Palm C.J."/>
            <person name="Southwick A.M."/>
            <person name="Wu H.C."/>
            <person name="Kim C.J."/>
            <person name="Nguyen M."/>
            <person name="Pham P.K."/>
            <person name="Cheuk R.F."/>
            <person name="Karlin-Newmann G."/>
            <person name="Liu S.X."/>
            <person name="Lam B."/>
            <person name="Sakano H."/>
            <person name="Wu T."/>
            <person name="Yu G."/>
            <person name="Miranda M."/>
            <person name="Quach H.L."/>
            <person name="Tripp M."/>
            <person name="Chang C.H."/>
            <person name="Lee J.M."/>
            <person name="Toriumi M.J."/>
            <person name="Chan M.M."/>
            <person name="Tang C.C."/>
            <person name="Onodera C.S."/>
            <person name="Deng J.M."/>
            <person name="Akiyama K."/>
            <person name="Ansari Y."/>
            <person name="Arakawa T."/>
            <person name="Banh J."/>
            <person name="Banno F."/>
            <person name="Bowser L."/>
            <person name="Brooks S.Y."/>
            <person name="Carninci P."/>
            <person name="Chao Q."/>
            <person name="Choy N."/>
            <person name="Enju A."/>
            <person name="Goldsmith A.D."/>
            <person name="Gurjal M."/>
            <person name="Hansen N.F."/>
            <person name="Hayashizaki Y."/>
            <person name="Johnson-Hopson C."/>
            <person name="Hsuan V.W."/>
            <person name="Iida K."/>
            <person name="Karnes M."/>
            <person name="Khan S."/>
            <person name="Koesema E."/>
            <person name="Ishida J."/>
            <person name="Jiang P.X."/>
            <person name="Jones T."/>
            <person name="Kawai J."/>
            <person name="Kamiya A."/>
            <person name="Meyers C."/>
            <person name="Nakajima M."/>
            <person name="Narusaka M."/>
            <person name="Seki M."/>
            <person name="Sakurai T."/>
            <person name="Satou M."/>
            <person name="Tamse R."/>
            <person name="Vaysberg M."/>
            <person name="Wallender E.K."/>
            <person name="Wong C."/>
            <person name="Yamamura Y."/>
            <person name="Yuan S."/>
            <person name="Shinozaki K."/>
            <person name="Davis R.W."/>
            <person name="Theologis A."/>
            <person name="Ecker J.R."/>
        </authorList>
    </citation>
    <scope>NUCLEOTIDE SEQUENCE [LARGE SCALE MRNA]</scope>
    <source>
        <strain>cv. Columbia</strain>
    </source>
</reference>
<reference key="4">
    <citation type="submission" date="2004-12" db="EMBL/GenBank/DDBJ databases">
        <title>Arabidopsis ORF clones.</title>
        <authorList>
            <person name="Kim C.J."/>
            <person name="Chen H."/>
            <person name="Cheuk R."/>
            <person name="Shinn P."/>
            <person name="Ecker J.R."/>
        </authorList>
    </citation>
    <scope>NUCLEOTIDE SEQUENCE [LARGE SCALE MRNA]</scope>
</reference>
<reference key="5">
    <citation type="journal article" date="2007" name="Plant J.">
        <title>Arabidopsis ESK1 encodes a novel regulator of freezing tolerance.</title>
        <authorList>
            <person name="Xin Z."/>
            <person name="Mandaokar A."/>
            <person name="Chen J."/>
            <person name="Last R.L."/>
            <person name="Browse J."/>
        </authorList>
    </citation>
    <scope>GENE FAMILY</scope>
    <source>
        <strain>cv. Columbia</strain>
    </source>
</reference>
<reference key="6">
    <citation type="journal article" date="2010" name="Plant Physiol.">
        <title>TRICHOME BIREFRINGENCE and its homolog AT5G01360 encode plant-specific DUF231 proteins required for cellulose biosynthesis in Arabidopsis.</title>
        <authorList>
            <person name="Bischoff V."/>
            <person name="Nita S."/>
            <person name="Neumetzler L."/>
            <person name="Schindelasch D."/>
            <person name="Urbain A."/>
            <person name="Eshed R."/>
            <person name="Persson S."/>
            <person name="Delmer D."/>
            <person name="Scheible W.R."/>
        </authorList>
    </citation>
    <scope>GENE FAMILY</scope>
    <scope>NOMENCLATURE</scope>
</reference>
<reference key="7">
    <citation type="journal article" date="2010" name="Plant Signal. Behav.">
        <title>Involvement of TBL/DUF231 proteins into cell wall biology.</title>
        <authorList>
            <person name="Bischoff V."/>
            <person name="Selbig J."/>
            <person name="Scheible W.R."/>
        </authorList>
    </citation>
    <scope>3D-STRUCTURE MODELING</scope>
</reference>
<name>TBL45_ARATH</name>
<sequence length="398" mass="45477">MAAVQCLTFLFLFLLQNATSASPLPLFRRPIQSNHSNFVKHPRRSQVVFPVNHSSCDLFAGEWVRDETYPLYRSKECGRGIIDPGFDCQTYGRPDSDYLKFRWKPFNCNVPRFNGVKFLQEMRDKTIMFVGDSLGRNQWESLICMISSSAPSINTHIIHEDPLSTFKILDYNVKVSFYRAPYLVDIDKINGKTTLKLDEISVDASNAWRTADVLLFNTGHWWSHTGSLRGWEQMETGGRYYGDMDRLVALRKGLGTWSSWVLRYINSPLTRVFFLSVSPTHYNPNEWTSRSKTSTITQGGKSCYGQTTPFSGTTYPTSSYVNQKKVIDDVVKEMKSHVSLMDITMLSALRVDGHPSIYSGDLNPSLKRNPDRSSDCSHWCLPGLPDTWNQLFYAALLY</sequence>
<accession>O80872</accession>
<dbReference type="EMBL" id="AC004680">
    <property type="protein sequence ID" value="AAC31851.1"/>
    <property type="molecule type" value="Genomic_DNA"/>
</dbReference>
<dbReference type="EMBL" id="CP002685">
    <property type="protein sequence ID" value="AEC08335.1"/>
    <property type="molecule type" value="Genomic_DNA"/>
</dbReference>
<dbReference type="EMBL" id="AF428324">
    <property type="protein sequence ID" value="AAL16254.1"/>
    <property type="molecule type" value="mRNA"/>
</dbReference>
<dbReference type="EMBL" id="BT020370">
    <property type="protein sequence ID" value="AAV85725.1"/>
    <property type="molecule type" value="mRNA"/>
</dbReference>
<dbReference type="PIR" id="T02484">
    <property type="entry name" value="T02484"/>
</dbReference>
<dbReference type="RefSeq" id="NP_565692.1">
    <property type="nucleotide sequence ID" value="NM_128556.3"/>
</dbReference>
<dbReference type="SMR" id="O80872"/>
<dbReference type="STRING" id="3702.O80872"/>
<dbReference type="iPTMnet" id="O80872"/>
<dbReference type="PaxDb" id="3702-AT2G30010.1"/>
<dbReference type="ProteomicsDB" id="234137"/>
<dbReference type="EnsemblPlants" id="AT2G30010.1">
    <property type="protein sequence ID" value="AT2G30010.1"/>
    <property type="gene ID" value="AT2G30010"/>
</dbReference>
<dbReference type="GeneID" id="817552"/>
<dbReference type="Gramene" id="AT2G30010.1">
    <property type="protein sequence ID" value="AT2G30010.1"/>
    <property type="gene ID" value="AT2G30010"/>
</dbReference>
<dbReference type="KEGG" id="ath:AT2G30010"/>
<dbReference type="Araport" id="AT2G30010"/>
<dbReference type="TAIR" id="AT2G30010">
    <property type="gene designation" value="TBL45"/>
</dbReference>
<dbReference type="eggNOG" id="ENOG502QR9P">
    <property type="taxonomic scope" value="Eukaryota"/>
</dbReference>
<dbReference type="HOGENOM" id="CLU_020953_3_0_1"/>
<dbReference type="InParanoid" id="O80872"/>
<dbReference type="OrthoDB" id="1839666at2759"/>
<dbReference type="PhylomeDB" id="O80872"/>
<dbReference type="PRO" id="PR:O80872"/>
<dbReference type="Proteomes" id="UP000006548">
    <property type="component" value="Chromosome 2"/>
</dbReference>
<dbReference type="ExpressionAtlas" id="O80872">
    <property type="expression patterns" value="baseline and differential"/>
</dbReference>
<dbReference type="GO" id="GO:0016020">
    <property type="term" value="C:membrane"/>
    <property type="evidence" value="ECO:0007669"/>
    <property type="project" value="UniProtKB-SubCell"/>
</dbReference>
<dbReference type="GO" id="GO:0016413">
    <property type="term" value="F:O-acetyltransferase activity"/>
    <property type="evidence" value="ECO:0007669"/>
    <property type="project" value="InterPro"/>
</dbReference>
<dbReference type="InterPro" id="IPR029962">
    <property type="entry name" value="TBL"/>
</dbReference>
<dbReference type="InterPro" id="IPR026057">
    <property type="entry name" value="TBL_C"/>
</dbReference>
<dbReference type="InterPro" id="IPR025846">
    <property type="entry name" value="TBL_N"/>
</dbReference>
<dbReference type="PANTHER" id="PTHR32285:SF311">
    <property type="entry name" value="PROTEIN TRICHOME BIREFRINGENCE-LIKE 45"/>
    <property type="match status" value="1"/>
</dbReference>
<dbReference type="PANTHER" id="PTHR32285">
    <property type="entry name" value="PROTEIN TRICHOME BIREFRINGENCE-LIKE 9-RELATED"/>
    <property type="match status" value="1"/>
</dbReference>
<dbReference type="Pfam" id="PF13839">
    <property type="entry name" value="PC-Esterase"/>
    <property type="match status" value="1"/>
</dbReference>
<dbReference type="Pfam" id="PF14416">
    <property type="entry name" value="PMR5N"/>
    <property type="match status" value="1"/>
</dbReference>
<proteinExistence type="evidence at transcript level"/>
<feature type="chain" id="PRO_0000425410" description="Protein trichome birefringence-like 45">
    <location>
        <begin position="1"/>
        <end position="398"/>
    </location>
</feature>
<feature type="transmembrane region" description="Helical; Signal-anchor for type II membrane protein" evidence="3">
    <location>
        <begin position="1"/>
        <end position="21"/>
    </location>
</feature>
<feature type="short sequence motif" description="GDS motif">
    <location>
        <begin position="131"/>
        <end position="133"/>
    </location>
</feature>
<feature type="short sequence motif" description="DCXHWCLPGXXDXWN motif">
    <location>
        <begin position="375"/>
        <end position="389"/>
    </location>
</feature>
<evidence type="ECO:0000250" key="1">
    <source>
        <dbReference type="UniProtKB" id="Q9FG35"/>
    </source>
</evidence>
<evidence type="ECO:0000250" key="2">
    <source>
        <dbReference type="UniProtKB" id="Q9LY46"/>
    </source>
</evidence>
<evidence type="ECO:0000255" key="3"/>
<evidence type="ECO:0000305" key="4"/>
<evidence type="ECO:0000305" key="5">
    <source>
    </source>
</evidence>